<proteinExistence type="evidence at transcript level"/>
<gene>
    <name type="primary">SYP32</name>
    <name type="ordered locus">At3g24350</name>
    <name type="ORF">K7M2.13</name>
</gene>
<name>SYP32_ARATH</name>
<feature type="chain" id="PRO_0000210257" description="Syntaxin-32">
    <location>
        <begin position="1"/>
        <end position="347"/>
    </location>
</feature>
<feature type="topological domain" description="Cytoplasmic" evidence="2">
    <location>
        <begin position="1"/>
        <end position="325"/>
    </location>
</feature>
<feature type="transmembrane region" description="Helical; Anchor for type IV membrane protein" evidence="2">
    <location>
        <begin position="326"/>
        <end position="346"/>
    </location>
</feature>
<feature type="topological domain" description="Vesicular" evidence="2">
    <location>
        <position position="347"/>
    </location>
</feature>
<feature type="domain" description="t-SNARE coiled-coil homology" evidence="3">
    <location>
        <begin position="255"/>
        <end position="317"/>
    </location>
</feature>
<feature type="region of interest" description="Disordered" evidence="4">
    <location>
        <begin position="172"/>
        <end position="191"/>
    </location>
</feature>
<feature type="region of interest" description="Disordered" evidence="4">
    <location>
        <begin position="208"/>
        <end position="251"/>
    </location>
</feature>
<feature type="compositionally biased region" description="Polar residues" evidence="4">
    <location>
        <begin position="177"/>
        <end position="191"/>
    </location>
</feature>
<feature type="compositionally biased region" description="Polar residues" evidence="4">
    <location>
        <begin position="213"/>
        <end position="222"/>
    </location>
</feature>
<feature type="compositionally biased region" description="Low complexity" evidence="4">
    <location>
        <begin position="237"/>
        <end position="249"/>
    </location>
</feature>
<evidence type="ECO:0000250" key="1"/>
<evidence type="ECO:0000255" key="2"/>
<evidence type="ECO:0000255" key="3">
    <source>
        <dbReference type="PROSITE-ProRule" id="PRU00202"/>
    </source>
</evidence>
<evidence type="ECO:0000256" key="4">
    <source>
        <dbReference type="SAM" id="MobiDB-lite"/>
    </source>
</evidence>
<evidence type="ECO:0000305" key="5"/>
<dbReference type="EMBL" id="AP000382">
    <property type="protein sequence ID" value="BAB02935.1"/>
    <property type="molecule type" value="Genomic_DNA"/>
</dbReference>
<dbReference type="EMBL" id="CP002686">
    <property type="protein sequence ID" value="AEE76892.1"/>
    <property type="molecule type" value="Genomic_DNA"/>
</dbReference>
<dbReference type="EMBL" id="BT004300">
    <property type="protein sequence ID" value="AAO42298.1"/>
    <property type="molecule type" value="mRNA"/>
</dbReference>
<dbReference type="EMBL" id="BT008604">
    <property type="protein sequence ID" value="AAP40429.1"/>
    <property type="molecule type" value="mRNA"/>
</dbReference>
<dbReference type="RefSeq" id="NP_189078.2">
    <molecule id="Q9LK09-1"/>
    <property type="nucleotide sequence ID" value="NM_113342.4"/>
</dbReference>
<dbReference type="SMR" id="Q9LK09"/>
<dbReference type="BioGRID" id="7356">
    <property type="interactions" value="76"/>
</dbReference>
<dbReference type="FunCoup" id="Q9LK09">
    <property type="interactions" value="4711"/>
</dbReference>
<dbReference type="IntAct" id="Q9LK09">
    <property type="interactions" value="76"/>
</dbReference>
<dbReference type="STRING" id="3702.Q9LK09"/>
<dbReference type="iPTMnet" id="Q9LK09"/>
<dbReference type="PaxDb" id="3702-AT3G24350.2"/>
<dbReference type="ProteomicsDB" id="228468">
    <molecule id="Q9LK09-1"/>
</dbReference>
<dbReference type="EnsemblPlants" id="AT3G24350.1">
    <molecule id="Q9LK09-1"/>
    <property type="protein sequence ID" value="AT3G24350.1"/>
    <property type="gene ID" value="AT3G24350"/>
</dbReference>
<dbReference type="GeneID" id="822024"/>
<dbReference type="Gramene" id="AT3G24350.1">
    <molecule id="Q9LK09-1"/>
    <property type="protein sequence ID" value="AT3G24350.1"/>
    <property type="gene ID" value="AT3G24350"/>
</dbReference>
<dbReference type="KEGG" id="ath:AT3G24350"/>
<dbReference type="Araport" id="AT3G24350"/>
<dbReference type="TAIR" id="AT3G24350">
    <property type="gene designation" value="SYP32"/>
</dbReference>
<dbReference type="eggNOG" id="KOG0812">
    <property type="taxonomic scope" value="Eukaryota"/>
</dbReference>
<dbReference type="HOGENOM" id="CLU_044998_0_0_1"/>
<dbReference type="InParanoid" id="Q9LK09"/>
<dbReference type="OMA" id="EHNHNVV"/>
<dbReference type="OrthoDB" id="421009at2759"/>
<dbReference type="PhylomeDB" id="Q9LK09"/>
<dbReference type="PRO" id="PR:Q9LK09"/>
<dbReference type="Proteomes" id="UP000006548">
    <property type="component" value="Chromosome 3"/>
</dbReference>
<dbReference type="ExpressionAtlas" id="Q9LK09">
    <property type="expression patterns" value="baseline and differential"/>
</dbReference>
<dbReference type="GO" id="GO:0005794">
    <property type="term" value="C:Golgi apparatus"/>
    <property type="evidence" value="ECO:0007669"/>
    <property type="project" value="UniProtKB-SubCell"/>
</dbReference>
<dbReference type="GO" id="GO:0016020">
    <property type="term" value="C:membrane"/>
    <property type="evidence" value="ECO:0007669"/>
    <property type="project" value="UniProtKB-KW"/>
</dbReference>
<dbReference type="GO" id="GO:0005484">
    <property type="term" value="F:SNAP receptor activity"/>
    <property type="evidence" value="ECO:0007669"/>
    <property type="project" value="InterPro"/>
</dbReference>
<dbReference type="GO" id="GO:0006886">
    <property type="term" value="P:intracellular protein transport"/>
    <property type="evidence" value="ECO:0007669"/>
    <property type="project" value="InterPro"/>
</dbReference>
<dbReference type="GO" id="GO:0016192">
    <property type="term" value="P:vesicle-mediated transport"/>
    <property type="evidence" value="ECO:0007669"/>
    <property type="project" value="InterPro"/>
</dbReference>
<dbReference type="CDD" id="cd15844">
    <property type="entry name" value="SNARE_syntaxin5"/>
    <property type="match status" value="1"/>
</dbReference>
<dbReference type="Gene3D" id="1.20.58.70">
    <property type="match status" value="1"/>
</dbReference>
<dbReference type="InterPro" id="IPR010989">
    <property type="entry name" value="SNARE"/>
</dbReference>
<dbReference type="InterPro" id="IPR045242">
    <property type="entry name" value="Syntaxin"/>
</dbReference>
<dbReference type="InterPro" id="IPR006012">
    <property type="entry name" value="Syntaxin/epimorphin_CS"/>
</dbReference>
<dbReference type="InterPro" id="IPR000727">
    <property type="entry name" value="T_SNARE_dom"/>
</dbReference>
<dbReference type="PANTHER" id="PTHR19957">
    <property type="entry name" value="SYNTAXIN"/>
    <property type="match status" value="1"/>
</dbReference>
<dbReference type="PANTHER" id="PTHR19957:SF415">
    <property type="entry name" value="SYNTAXIN-32"/>
    <property type="match status" value="1"/>
</dbReference>
<dbReference type="Pfam" id="PF05739">
    <property type="entry name" value="SNARE"/>
    <property type="match status" value="1"/>
</dbReference>
<dbReference type="SMART" id="SM00397">
    <property type="entry name" value="t_SNARE"/>
    <property type="match status" value="1"/>
</dbReference>
<dbReference type="SUPFAM" id="SSF47661">
    <property type="entry name" value="t-snare proteins"/>
    <property type="match status" value="1"/>
</dbReference>
<dbReference type="PROSITE" id="PS00914">
    <property type="entry name" value="SYNTAXIN"/>
    <property type="match status" value="1"/>
</dbReference>
<dbReference type="PROSITE" id="PS50192">
    <property type="entry name" value="T_SNARE"/>
    <property type="match status" value="1"/>
</dbReference>
<sequence>MSARHGQSSYRDRSDEFFKIVETLRRSIAPAPAANNVPYGNNRNDGARREDLINKSEFNKRASHIGLAINQTSQKLSKLAKLAKRTSVFDDPTQEIQELTVVIKQEISALNSALVDLQLFRSSQNDEGNNSRDRDKSTHSATVVDDLKYRLMDTTKEFKDVLTMRTENMKVHESRRQLFSSNASKESTNPFVRQRPLAAKAAASESVPLPWANGSSSSSSQLVPWKPGEGESSPLLQQSQQQQQQQQQQMVPLQDTYMQGRAEALHTVESTIHELSSIFTQLATMVSQQGEIAIRIDQNMEDTLANVEGAQSQLARYLNSISSNRWLMMKIFFVLIAFLMIFLFFVA</sequence>
<keyword id="KW-0025">Alternative splicing</keyword>
<keyword id="KW-0175">Coiled coil</keyword>
<keyword id="KW-0333">Golgi apparatus</keyword>
<keyword id="KW-0472">Membrane</keyword>
<keyword id="KW-0653">Protein transport</keyword>
<keyword id="KW-1185">Reference proteome</keyword>
<keyword id="KW-0812">Transmembrane</keyword>
<keyword id="KW-1133">Transmembrane helix</keyword>
<keyword id="KW-0813">Transport</keyword>
<accession>Q9LK09</accession>
<comment type="function">
    <text evidence="1">Vesicle trafficking protein that functions in the secretory pathway.</text>
</comment>
<comment type="subunit">
    <text evidence="1">Part of the t-SNARE complex.</text>
</comment>
<comment type="subcellular location">
    <subcellularLocation>
        <location evidence="1">Golgi apparatus</location>
        <location evidence="1">cis-Golgi network membrane</location>
        <topology evidence="1">Single-pass type IV membrane protein</topology>
    </subcellularLocation>
</comment>
<comment type="alternative products">
    <event type="alternative splicing"/>
    <isoform>
        <id>Q9LK09-1</id>
        <name>1</name>
        <sequence type="displayed"/>
    </isoform>
    <text>A number of isoforms are produced. According to EST sequences.</text>
</comment>
<comment type="similarity">
    <text evidence="5">Belongs to the syntaxin family.</text>
</comment>
<reference key="1">
    <citation type="journal article" date="2000" name="DNA Res.">
        <title>Structural analysis of Arabidopsis thaliana chromosome 3. II. Sequence features of the 4,251,695 bp regions covered by 90 P1, TAC and BAC clones.</title>
        <authorList>
            <person name="Kaneko T."/>
            <person name="Katoh T."/>
            <person name="Sato S."/>
            <person name="Nakamura Y."/>
            <person name="Asamizu E."/>
            <person name="Tabata S."/>
        </authorList>
    </citation>
    <scope>NUCLEOTIDE SEQUENCE [LARGE SCALE GENOMIC DNA]</scope>
    <source>
        <strain>cv. Columbia</strain>
    </source>
</reference>
<reference key="2">
    <citation type="journal article" date="2017" name="Plant J.">
        <title>Araport11: a complete reannotation of the Arabidopsis thaliana reference genome.</title>
        <authorList>
            <person name="Cheng C.Y."/>
            <person name="Krishnakumar V."/>
            <person name="Chan A.P."/>
            <person name="Thibaud-Nissen F."/>
            <person name="Schobel S."/>
            <person name="Town C.D."/>
        </authorList>
    </citation>
    <scope>GENOME REANNOTATION</scope>
    <source>
        <strain>cv. Columbia</strain>
    </source>
</reference>
<reference key="3">
    <citation type="journal article" date="2003" name="Science">
        <title>Empirical analysis of transcriptional activity in the Arabidopsis genome.</title>
        <authorList>
            <person name="Yamada K."/>
            <person name="Lim J."/>
            <person name="Dale J.M."/>
            <person name="Chen H."/>
            <person name="Shinn P."/>
            <person name="Palm C.J."/>
            <person name="Southwick A.M."/>
            <person name="Wu H.C."/>
            <person name="Kim C.J."/>
            <person name="Nguyen M."/>
            <person name="Pham P.K."/>
            <person name="Cheuk R.F."/>
            <person name="Karlin-Newmann G."/>
            <person name="Liu S.X."/>
            <person name="Lam B."/>
            <person name="Sakano H."/>
            <person name="Wu T."/>
            <person name="Yu G."/>
            <person name="Miranda M."/>
            <person name="Quach H.L."/>
            <person name="Tripp M."/>
            <person name="Chang C.H."/>
            <person name="Lee J.M."/>
            <person name="Toriumi M.J."/>
            <person name="Chan M.M."/>
            <person name="Tang C.C."/>
            <person name="Onodera C.S."/>
            <person name="Deng J.M."/>
            <person name="Akiyama K."/>
            <person name="Ansari Y."/>
            <person name="Arakawa T."/>
            <person name="Banh J."/>
            <person name="Banno F."/>
            <person name="Bowser L."/>
            <person name="Brooks S.Y."/>
            <person name="Carninci P."/>
            <person name="Chao Q."/>
            <person name="Choy N."/>
            <person name="Enju A."/>
            <person name="Goldsmith A.D."/>
            <person name="Gurjal M."/>
            <person name="Hansen N.F."/>
            <person name="Hayashizaki Y."/>
            <person name="Johnson-Hopson C."/>
            <person name="Hsuan V.W."/>
            <person name="Iida K."/>
            <person name="Karnes M."/>
            <person name="Khan S."/>
            <person name="Koesema E."/>
            <person name="Ishida J."/>
            <person name="Jiang P.X."/>
            <person name="Jones T."/>
            <person name="Kawai J."/>
            <person name="Kamiya A."/>
            <person name="Meyers C."/>
            <person name="Nakajima M."/>
            <person name="Narusaka M."/>
            <person name="Seki M."/>
            <person name="Sakurai T."/>
            <person name="Satou M."/>
            <person name="Tamse R."/>
            <person name="Vaysberg M."/>
            <person name="Wallender E.K."/>
            <person name="Wong C."/>
            <person name="Yamamura Y."/>
            <person name="Yuan S."/>
            <person name="Shinozaki K."/>
            <person name="Davis R.W."/>
            <person name="Theologis A."/>
            <person name="Ecker J.R."/>
        </authorList>
    </citation>
    <scope>NUCLEOTIDE SEQUENCE [LARGE SCALE MRNA]</scope>
    <source>
        <strain>cv. Columbia</strain>
    </source>
</reference>
<protein>
    <recommendedName>
        <fullName>Syntaxin-32</fullName>
        <shortName>AtSYP32</shortName>
    </recommendedName>
</protein>
<organism>
    <name type="scientific">Arabidopsis thaliana</name>
    <name type="common">Mouse-ear cress</name>
    <dbReference type="NCBI Taxonomy" id="3702"/>
    <lineage>
        <taxon>Eukaryota</taxon>
        <taxon>Viridiplantae</taxon>
        <taxon>Streptophyta</taxon>
        <taxon>Embryophyta</taxon>
        <taxon>Tracheophyta</taxon>
        <taxon>Spermatophyta</taxon>
        <taxon>Magnoliopsida</taxon>
        <taxon>eudicotyledons</taxon>
        <taxon>Gunneridae</taxon>
        <taxon>Pentapetalae</taxon>
        <taxon>rosids</taxon>
        <taxon>malvids</taxon>
        <taxon>Brassicales</taxon>
        <taxon>Brassicaceae</taxon>
        <taxon>Camelineae</taxon>
        <taxon>Arabidopsis</taxon>
    </lineage>
</organism>